<reference key="1">
    <citation type="journal article" date="2000" name="Nucleic Acids Res.">
        <title>Genome sequences of Chlamydia trachomatis MoPn and Chlamydia pneumoniae AR39.</title>
        <authorList>
            <person name="Read T.D."/>
            <person name="Brunham R.C."/>
            <person name="Shen C."/>
            <person name="Gill S.R."/>
            <person name="Heidelberg J.F."/>
            <person name="White O."/>
            <person name="Hickey E.K."/>
            <person name="Peterson J.D."/>
            <person name="Utterback T.R."/>
            <person name="Berry K.J."/>
            <person name="Bass S."/>
            <person name="Linher K.D."/>
            <person name="Weidman J.F."/>
            <person name="Khouri H.M."/>
            <person name="Craven B."/>
            <person name="Bowman C."/>
            <person name="Dodson R.J."/>
            <person name="Gwinn M.L."/>
            <person name="Nelson W.C."/>
            <person name="DeBoy R.T."/>
            <person name="Kolonay J.F."/>
            <person name="McClarty G."/>
            <person name="Salzberg S.L."/>
            <person name="Eisen J.A."/>
            <person name="Fraser C.M."/>
        </authorList>
    </citation>
    <scope>NUCLEOTIDE SEQUENCE [LARGE SCALE GENOMIC DNA]</scope>
    <source>
        <strain>MoPn / Nigg</strain>
    </source>
</reference>
<feature type="chain" id="PRO_0000070757" description="Chaperone protein DnaJ">
    <location>
        <begin position="1"/>
        <end position="392"/>
    </location>
</feature>
<feature type="domain" description="J" evidence="1">
    <location>
        <begin position="2"/>
        <end position="67"/>
    </location>
</feature>
<feature type="repeat" description="CXXCXGXG motif">
    <location>
        <begin position="162"/>
        <end position="169"/>
    </location>
</feature>
<feature type="repeat" description="CXXCXGXG motif">
    <location>
        <begin position="179"/>
        <end position="186"/>
    </location>
</feature>
<feature type="repeat" description="CXXCXGXG motif">
    <location>
        <begin position="201"/>
        <end position="208"/>
    </location>
</feature>
<feature type="repeat" description="CXXCXGXG motif">
    <location>
        <begin position="215"/>
        <end position="222"/>
    </location>
</feature>
<feature type="zinc finger region" description="CR-type" evidence="1">
    <location>
        <begin position="149"/>
        <end position="227"/>
    </location>
</feature>
<feature type="binding site" evidence="1">
    <location>
        <position position="162"/>
    </location>
    <ligand>
        <name>Zn(2+)</name>
        <dbReference type="ChEBI" id="CHEBI:29105"/>
        <label>1</label>
    </ligand>
</feature>
<feature type="binding site" evidence="1">
    <location>
        <position position="165"/>
    </location>
    <ligand>
        <name>Zn(2+)</name>
        <dbReference type="ChEBI" id="CHEBI:29105"/>
        <label>1</label>
    </ligand>
</feature>
<feature type="binding site" evidence="1">
    <location>
        <position position="179"/>
    </location>
    <ligand>
        <name>Zn(2+)</name>
        <dbReference type="ChEBI" id="CHEBI:29105"/>
        <label>2</label>
    </ligand>
</feature>
<feature type="binding site" evidence="1">
    <location>
        <position position="182"/>
    </location>
    <ligand>
        <name>Zn(2+)</name>
        <dbReference type="ChEBI" id="CHEBI:29105"/>
        <label>2</label>
    </ligand>
</feature>
<feature type="binding site" evidence="1">
    <location>
        <position position="201"/>
    </location>
    <ligand>
        <name>Zn(2+)</name>
        <dbReference type="ChEBI" id="CHEBI:29105"/>
        <label>2</label>
    </ligand>
</feature>
<feature type="binding site" evidence="1">
    <location>
        <position position="204"/>
    </location>
    <ligand>
        <name>Zn(2+)</name>
        <dbReference type="ChEBI" id="CHEBI:29105"/>
        <label>2</label>
    </ligand>
</feature>
<feature type="binding site" evidence="1">
    <location>
        <position position="215"/>
    </location>
    <ligand>
        <name>Zn(2+)</name>
        <dbReference type="ChEBI" id="CHEBI:29105"/>
        <label>1</label>
    </ligand>
</feature>
<feature type="binding site" evidence="1">
    <location>
        <position position="218"/>
    </location>
    <ligand>
        <name>Zn(2+)</name>
        <dbReference type="ChEBI" id="CHEBI:29105"/>
        <label>1</label>
    </ligand>
</feature>
<sequence>MDYYTILGVAKTATPEEIKKAYRKLAVKYHPDKNPGDAEAERRFKEVSEAYEVLGDAQKRESYDRYGKDGPFAGAGGFGGAGMGNMEDALRTFMGAFGGDFGGNGGGFFEGLFGGLGEAFGMRGGSEGARQGASKKVHITLSFEEAAKGVEKELLVSGYKSCDACSGSGAKTSKGVKVCDRCKGSGQVVQSRGFFSMASTCPDCSGEGRVITDPCSECRGQGRIKDKRSVHVNIPSGVDSGMRLKMEGYGDAGQNGAPAGDLYIFIDVEPHPVFERHGDDLVLELPIGFVDAALGIKKEIPTLLKEGTCRLNIPEGIQSGTVLKVRGQGFPNVHGKARGDLLVRISVETPQHLSNEQKELLRKFSETEKAENFPKKRSFLDKIKGFFSDFAV</sequence>
<comment type="function">
    <text evidence="1">Participates actively in the response to hyperosmotic and heat shock by preventing the aggregation of stress-denatured proteins and by disaggregating proteins, also in an autonomous, DnaK-independent fashion. Unfolded proteins bind initially to DnaJ; upon interaction with the DnaJ-bound protein, DnaK hydrolyzes its bound ATP, resulting in the formation of a stable complex. GrpE releases ADP from DnaK; ATP binding to DnaK triggers the release of the substrate protein, thus completing the reaction cycle. Several rounds of ATP-dependent interactions between DnaJ, DnaK and GrpE are required for fully efficient folding. Also involved, together with DnaK and GrpE, in the DNA replication of plasmids through activation of initiation proteins.</text>
</comment>
<comment type="cofactor">
    <cofactor evidence="1">
        <name>Zn(2+)</name>
        <dbReference type="ChEBI" id="CHEBI:29105"/>
    </cofactor>
    <text evidence="1">Binds 2 Zn(2+) ions per monomer.</text>
</comment>
<comment type="subunit">
    <text evidence="1">Homodimer.</text>
</comment>
<comment type="subcellular location">
    <subcellularLocation>
        <location evidence="1">Cytoplasm</location>
    </subcellularLocation>
</comment>
<comment type="domain">
    <text evidence="1">The J domain is necessary and sufficient to stimulate DnaK ATPase activity. Zinc center 1 plays an important role in the autonomous, DnaK-independent chaperone activity of DnaJ. Zinc center 2 is essential for interaction with DnaK and for DnaJ activity.</text>
</comment>
<comment type="similarity">
    <text evidence="1">Belongs to the DnaJ family.</text>
</comment>
<name>DNAJ_CHLMU</name>
<accession>Q9PK53</accession>
<organism>
    <name type="scientific">Chlamydia muridarum (strain MoPn / Nigg)</name>
    <dbReference type="NCBI Taxonomy" id="243161"/>
    <lineage>
        <taxon>Bacteria</taxon>
        <taxon>Pseudomonadati</taxon>
        <taxon>Chlamydiota</taxon>
        <taxon>Chlamydiia</taxon>
        <taxon>Chlamydiales</taxon>
        <taxon>Chlamydiaceae</taxon>
        <taxon>Chlamydia/Chlamydophila group</taxon>
        <taxon>Chlamydia</taxon>
    </lineage>
</organism>
<evidence type="ECO:0000255" key="1">
    <source>
        <dbReference type="HAMAP-Rule" id="MF_01152"/>
    </source>
</evidence>
<proteinExistence type="inferred from homology"/>
<gene>
    <name evidence="1" type="primary">dnaJ</name>
    <name type="ordered locus">TC_0619</name>
</gene>
<keyword id="KW-0143">Chaperone</keyword>
<keyword id="KW-0963">Cytoplasm</keyword>
<keyword id="KW-0235">DNA replication</keyword>
<keyword id="KW-0479">Metal-binding</keyword>
<keyword id="KW-0677">Repeat</keyword>
<keyword id="KW-0346">Stress response</keyword>
<keyword id="KW-0862">Zinc</keyword>
<keyword id="KW-0863">Zinc-finger</keyword>
<protein>
    <recommendedName>
        <fullName evidence="1">Chaperone protein DnaJ</fullName>
    </recommendedName>
</protein>
<dbReference type="EMBL" id="AE002160">
    <property type="protein sequence ID" value="AAF39450.1"/>
    <property type="molecule type" value="Genomic_DNA"/>
</dbReference>
<dbReference type="PIR" id="D81683">
    <property type="entry name" value="D81683"/>
</dbReference>
<dbReference type="RefSeq" id="WP_010231012.1">
    <property type="nucleotide sequence ID" value="NZ_CP063055.1"/>
</dbReference>
<dbReference type="SMR" id="Q9PK53"/>
<dbReference type="GeneID" id="1245979"/>
<dbReference type="KEGG" id="cmu:TC_0619"/>
<dbReference type="eggNOG" id="COG0484">
    <property type="taxonomic scope" value="Bacteria"/>
</dbReference>
<dbReference type="HOGENOM" id="CLU_017633_0_7_0"/>
<dbReference type="OrthoDB" id="9779889at2"/>
<dbReference type="Proteomes" id="UP000000800">
    <property type="component" value="Chromosome"/>
</dbReference>
<dbReference type="GO" id="GO:0005737">
    <property type="term" value="C:cytoplasm"/>
    <property type="evidence" value="ECO:0007669"/>
    <property type="project" value="UniProtKB-SubCell"/>
</dbReference>
<dbReference type="GO" id="GO:0005524">
    <property type="term" value="F:ATP binding"/>
    <property type="evidence" value="ECO:0007669"/>
    <property type="project" value="InterPro"/>
</dbReference>
<dbReference type="GO" id="GO:0031072">
    <property type="term" value="F:heat shock protein binding"/>
    <property type="evidence" value="ECO:0007669"/>
    <property type="project" value="InterPro"/>
</dbReference>
<dbReference type="GO" id="GO:0051082">
    <property type="term" value="F:unfolded protein binding"/>
    <property type="evidence" value="ECO:0007669"/>
    <property type="project" value="UniProtKB-UniRule"/>
</dbReference>
<dbReference type="GO" id="GO:0008270">
    <property type="term" value="F:zinc ion binding"/>
    <property type="evidence" value="ECO:0007669"/>
    <property type="project" value="UniProtKB-UniRule"/>
</dbReference>
<dbReference type="GO" id="GO:0051085">
    <property type="term" value="P:chaperone cofactor-dependent protein refolding"/>
    <property type="evidence" value="ECO:0007669"/>
    <property type="project" value="TreeGrafter"/>
</dbReference>
<dbReference type="GO" id="GO:0006260">
    <property type="term" value="P:DNA replication"/>
    <property type="evidence" value="ECO:0007669"/>
    <property type="project" value="UniProtKB-KW"/>
</dbReference>
<dbReference type="GO" id="GO:0042026">
    <property type="term" value="P:protein refolding"/>
    <property type="evidence" value="ECO:0007669"/>
    <property type="project" value="TreeGrafter"/>
</dbReference>
<dbReference type="GO" id="GO:0009408">
    <property type="term" value="P:response to heat"/>
    <property type="evidence" value="ECO:0007669"/>
    <property type="project" value="InterPro"/>
</dbReference>
<dbReference type="CDD" id="cd06257">
    <property type="entry name" value="DnaJ"/>
    <property type="match status" value="1"/>
</dbReference>
<dbReference type="CDD" id="cd10747">
    <property type="entry name" value="DnaJ_C"/>
    <property type="match status" value="1"/>
</dbReference>
<dbReference type="CDD" id="cd10719">
    <property type="entry name" value="DnaJ_zf"/>
    <property type="match status" value="1"/>
</dbReference>
<dbReference type="FunFam" id="1.10.287.110:FF:000034">
    <property type="entry name" value="Chaperone protein DnaJ"/>
    <property type="match status" value="1"/>
</dbReference>
<dbReference type="FunFam" id="2.60.260.20:FF:000005">
    <property type="entry name" value="Chaperone protein dnaJ 1, mitochondrial"/>
    <property type="match status" value="1"/>
</dbReference>
<dbReference type="FunFam" id="2.10.230.10:FF:000002">
    <property type="entry name" value="Molecular chaperone DnaJ"/>
    <property type="match status" value="1"/>
</dbReference>
<dbReference type="Gene3D" id="1.10.287.110">
    <property type="entry name" value="DnaJ domain"/>
    <property type="match status" value="1"/>
</dbReference>
<dbReference type="Gene3D" id="2.10.230.10">
    <property type="entry name" value="Heat shock protein DnaJ, cysteine-rich domain"/>
    <property type="match status" value="1"/>
</dbReference>
<dbReference type="Gene3D" id="2.60.260.20">
    <property type="entry name" value="Urease metallochaperone UreE, N-terminal domain"/>
    <property type="match status" value="2"/>
</dbReference>
<dbReference type="HAMAP" id="MF_01152">
    <property type="entry name" value="DnaJ"/>
    <property type="match status" value="1"/>
</dbReference>
<dbReference type="InterPro" id="IPR012724">
    <property type="entry name" value="DnaJ"/>
</dbReference>
<dbReference type="InterPro" id="IPR002939">
    <property type="entry name" value="DnaJ_C"/>
</dbReference>
<dbReference type="InterPro" id="IPR001623">
    <property type="entry name" value="DnaJ_domain"/>
</dbReference>
<dbReference type="InterPro" id="IPR018253">
    <property type="entry name" value="DnaJ_domain_CS"/>
</dbReference>
<dbReference type="InterPro" id="IPR008971">
    <property type="entry name" value="HSP40/DnaJ_pept-bd"/>
</dbReference>
<dbReference type="InterPro" id="IPR001305">
    <property type="entry name" value="HSP_DnaJ_Cys-rich_dom"/>
</dbReference>
<dbReference type="InterPro" id="IPR036410">
    <property type="entry name" value="HSP_DnaJ_Cys-rich_dom_sf"/>
</dbReference>
<dbReference type="InterPro" id="IPR036869">
    <property type="entry name" value="J_dom_sf"/>
</dbReference>
<dbReference type="NCBIfam" id="TIGR02349">
    <property type="entry name" value="DnaJ_bact"/>
    <property type="match status" value="1"/>
</dbReference>
<dbReference type="NCBIfam" id="NF008035">
    <property type="entry name" value="PRK10767.1"/>
    <property type="match status" value="1"/>
</dbReference>
<dbReference type="NCBIfam" id="NF010877">
    <property type="entry name" value="PRK14284.1"/>
    <property type="match status" value="1"/>
</dbReference>
<dbReference type="PANTHER" id="PTHR43096:SF48">
    <property type="entry name" value="CHAPERONE PROTEIN DNAJ"/>
    <property type="match status" value="1"/>
</dbReference>
<dbReference type="PANTHER" id="PTHR43096">
    <property type="entry name" value="DNAJ HOMOLOG 1, MITOCHONDRIAL-RELATED"/>
    <property type="match status" value="1"/>
</dbReference>
<dbReference type="Pfam" id="PF00226">
    <property type="entry name" value="DnaJ"/>
    <property type="match status" value="1"/>
</dbReference>
<dbReference type="Pfam" id="PF01556">
    <property type="entry name" value="DnaJ_C"/>
    <property type="match status" value="1"/>
</dbReference>
<dbReference type="Pfam" id="PF00684">
    <property type="entry name" value="DnaJ_CXXCXGXG"/>
    <property type="match status" value="1"/>
</dbReference>
<dbReference type="PRINTS" id="PR00625">
    <property type="entry name" value="JDOMAIN"/>
</dbReference>
<dbReference type="SMART" id="SM00271">
    <property type="entry name" value="DnaJ"/>
    <property type="match status" value="1"/>
</dbReference>
<dbReference type="SUPFAM" id="SSF46565">
    <property type="entry name" value="Chaperone J-domain"/>
    <property type="match status" value="1"/>
</dbReference>
<dbReference type="SUPFAM" id="SSF57938">
    <property type="entry name" value="DnaJ/Hsp40 cysteine-rich domain"/>
    <property type="match status" value="1"/>
</dbReference>
<dbReference type="SUPFAM" id="SSF49493">
    <property type="entry name" value="HSP40/DnaJ peptide-binding domain"/>
    <property type="match status" value="2"/>
</dbReference>
<dbReference type="PROSITE" id="PS00636">
    <property type="entry name" value="DNAJ_1"/>
    <property type="match status" value="1"/>
</dbReference>
<dbReference type="PROSITE" id="PS50076">
    <property type="entry name" value="DNAJ_2"/>
    <property type="match status" value="1"/>
</dbReference>
<dbReference type="PROSITE" id="PS51188">
    <property type="entry name" value="ZF_CR"/>
    <property type="match status" value="1"/>
</dbReference>